<sequence length="159" mass="17565">MSVKGQFNMRNAAADTFAMVIFSFITGMMIEVFVSGMTFEQSLASRTLSIPVNIAIAWPYGVFRDYLLRTGHRLSPSSWMKGLSDMVAYVLFQSPVYACILLAVGAGTDQIITAVTSNAFVSGALGIVYGQFLDACRRMFKVPGYCRELSHPEPQHQEM</sequence>
<dbReference type="EMBL" id="CR378671">
    <property type="protein sequence ID" value="CAG20915.1"/>
    <property type="molecule type" value="Genomic_DNA"/>
</dbReference>
<dbReference type="RefSeq" id="WP_011219198.1">
    <property type="nucleotide sequence ID" value="NC_006370.1"/>
</dbReference>
<dbReference type="STRING" id="298386.PBPRA2535"/>
<dbReference type="KEGG" id="ppr:PBPRA2535"/>
<dbReference type="eggNOG" id="ENOG502ZRFS">
    <property type="taxonomic scope" value="Bacteria"/>
</dbReference>
<dbReference type="HOGENOM" id="CLU_126493_0_0_6"/>
<dbReference type="Proteomes" id="UP000000593">
    <property type="component" value="Chromosome 1"/>
</dbReference>
<dbReference type="GO" id="GO:0005886">
    <property type="term" value="C:plasma membrane"/>
    <property type="evidence" value="ECO:0007669"/>
    <property type="project" value="UniProtKB-SubCell"/>
</dbReference>
<dbReference type="GO" id="GO:0034639">
    <property type="term" value="F:L-amino acid efflux transmembrane transporter activity"/>
    <property type="evidence" value="ECO:0007669"/>
    <property type="project" value="UniProtKB-UniRule"/>
</dbReference>
<dbReference type="GO" id="GO:0032973">
    <property type="term" value="P:amino acid export across plasma membrane"/>
    <property type="evidence" value="ECO:0007669"/>
    <property type="project" value="UniProtKB-UniRule"/>
</dbReference>
<dbReference type="HAMAP" id="MF_00914">
    <property type="entry name" value="L_Ala_exporter"/>
    <property type="match status" value="1"/>
</dbReference>
<dbReference type="InterPro" id="IPR010574">
    <property type="entry name" value="Ala_export_AlaE"/>
</dbReference>
<dbReference type="Pfam" id="PF06610">
    <property type="entry name" value="AlaE"/>
    <property type="match status" value="1"/>
</dbReference>
<accession>Q6LP61</accession>
<feature type="chain" id="PRO_0000415626" description="L-alanine exporter AlaE">
    <location>
        <begin position="1"/>
        <end position="159"/>
    </location>
</feature>
<feature type="transmembrane region" description="Helical" evidence="1">
    <location>
        <begin position="17"/>
        <end position="37"/>
    </location>
</feature>
<feature type="transmembrane region" description="Helical" evidence="1">
    <location>
        <begin position="48"/>
        <end position="68"/>
    </location>
</feature>
<feature type="transmembrane region" description="Helical" evidence="1">
    <location>
        <begin position="86"/>
        <end position="106"/>
    </location>
</feature>
<feature type="transmembrane region" description="Helical" evidence="1">
    <location>
        <begin position="110"/>
        <end position="130"/>
    </location>
</feature>
<reference key="1">
    <citation type="journal article" date="2005" name="Science">
        <title>Life at depth: Photobacterium profundum genome sequence and expression analysis.</title>
        <authorList>
            <person name="Vezzi A."/>
            <person name="Campanaro S."/>
            <person name="D'Angelo M."/>
            <person name="Simonato F."/>
            <person name="Vitulo N."/>
            <person name="Lauro F.M."/>
            <person name="Cestaro A."/>
            <person name="Malacrida G."/>
            <person name="Simionati B."/>
            <person name="Cannata N."/>
            <person name="Romualdi C."/>
            <person name="Bartlett D.H."/>
            <person name="Valle G."/>
        </authorList>
    </citation>
    <scope>NUCLEOTIDE SEQUENCE [LARGE SCALE GENOMIC DNA]</scope>
    <source>
        <strain>ATCC BAA-1253 / SS9</strain>
    </source>
</reference>
<evidence type="ECO:0000255" key="1">
    <source>
        <dbReference type="HAMAP-Rule" id="MF_00914"/>
    </source>
</evidence>
<proteinExistence type="inferred from homology"/>
<name>ALAE_PHOPR</name>
<organism>
    <name type="scientific">Photobacterium profundum (strain SS9)</name>
    <dbReference type="NCBI Taxonomy" id="298386"/>
    <lineage>
        <taxon>Bacteria</taxon>
        <taxon>Pseudomonadati</taxon>
        <taxon>Pseudomonadota</taxon>
        <taxon>Gammaproteobacteria</taxon>
        <taxon>Vibrionales</taxon>
        <taxon>Vibrionaceae</taxon>
        <taxon>Photobacterium</taxon>
    </lineage>
</organism>
<keyword id="KW-0029">Amino-acid transport</keyword>
<keyword id="KW-0997">Cell inner membrane</keyword>
<keyword id="KW-1003">Cell membrane</keyword>
<keyword id="KW-0472">Membrane</keyword>
<keyword id="KW-1185">Reference proteome</keyword>
<keyword id="KW-0812">Transmembrane</keyword>
<keyword id="KW-1133">Transmembrane helix</keyword>
<keyword id="KW-0813">Transport</keyword>
<gene>
    <name evidence="1" type="primary">alaE</name>
    <name type="ordered locus">PBPRA2535</name>
</gene>
<protein>
    <recommendedName>
        <fullName evidence="1">L-alanine exporter AlaE</fullName>
    </recommendedName>
</protein>
<comment type="function">
    <text evidence="1">Exports L-alanine.</text>
</comment>
<comment type="subcellular location">
    <subcellularLocation>
        <location evidence="1">Cell inner membrane</location>
        <topology evidence="1">Multi-pass membrane protein</topology>
    </subcellularLocation>
</comment>
<comment type="similarity">
    <text evidence="1">Belongs to the AlaE exporter family.</text>
</comment>